<gene>
    <name type="primary">GTF3C2</name>
    <name type="synonym">KIAA0011</name>
</gene>
<accession>Q8WUA4</accession>
<accession>D6W557</accession>
<accession>Q16632</accession>
<accession>Q9BWI7</accession>
<organism>
    <name type="scientific">Homo sapiens</name>
    <name type="common">Human</name>
    <dbReference type="NCBI Taxonomy" id="9606"/>
    <lineage>
        <taxon>Eukaryota</taxon>
        <taxon>Metazoa</taxon>
        <taxon>Chordata</taxon>
        <taxon>Craniata</taxon>
        <taxon>Vertebrata</taxon>
        <taxon>Euteleostomi</taxon>
        <taxon>Mammalia</taxon>
        <taxon>Eutheria</taxon>
        <taxon>Euarchontoglires</taxon>
        <taxon>Primates</taxon>
        <taxon>Haplorrhini</taxon>
        <taxon>Catarrhini</taxon>
        <taxon>Hominidae</taxon>
        <taxon>Homo</taxon>
    </lineage>
</organism>
<feature type="chain" id="PRO_0000050985" description="General transcription factor 3C polypeptide 2">
    <location>
        <begin position="1"/>
        <end position="911"/>
    </location>
</feature>
<feature type="repeat" description="WD 1">
    <location>
        <begin position="366"/>
        <end position="426"/>
    </location>
</feature>
<feature type="repeat" description="WD 2">
    <location>
        <begin position="427"/>
        <end position="483"/>
    </location>
</feature>
<feature type="repeat" description="WD 3">
    <location>
        <begin position="484"/>
        <end position="535"/>
    </location>
</feature>
<feature type="repeat" description="WD 4">
    <location>
        <begin position="536"/>
        <end position="603"/>
    </location>
</feature>
<feature type="repeat" description="WD 5">
    <location>
        <begin position="604"/>
        <end position="654"/>
    </location>
</feature>
<feature type="repeat" description="WD 6">
    <location>
        <begin position="655"/>
        <end position="690"/>
    </location>
</feature>
<feature type="region of interest" description="Disordered" evidence="1">
    <location>
        <begin position="24"/>
        <end position="187"/>
    </location>
</feature>
<feature type="region of interest" description="Disordered" evidence="1">
    <location>
        <begin position="205"/>
        <end position="297"/>
    </location>
</feature>
<feature type="region of interest" description="Disordered" evidence="1">
    <location>
        <begin position="765"/>
        <end position="785"/>
    </location>
</feature>
<feature type="region of interest" description="Disordered" evidence="1">
    <location>
        <begin position="889"/>
        <end position="911"/>
    </location>
</feature>
<feature type="compositionally biased region" description="Polar residues" evidence="1">
    <location>
        <begin position="35"/>
        <end position="46"/>
    </location>
</feature>
<feature type="compositionally biased region" description="Basic and acidic residues" evidence="1">
    <location>
        <begin position="64"/>
        <end position="81"/>
    </location>
</feature>
<feature type="compositionally biased region" description="Basic residues" evidence="1">
    <location>
        <begin position="92"/>
        <end position="112"/>
    </location>
</feature>
<feature type="compositionally biased region" description="Pro residues" evidence="1">
    <location>
        <begin position="114"/>
        <end position="123"/>
    </location>
</feature>
<feature type="compositionally biased region" description="Acidic residues" evidence="1">
    <location>
        <begin position="253"/>
        <end position="262"/>
    </location>
</feature>
<feature type="compositionally biased region" description="Low complexity" evidence="1">
    <location>
        <begin position="263"/>
        <end position="277"/>
    </location>
</feature>
<feature type="modified residue" description="Phosphoserine" evidence="5 9">
    <location>
        <position position="63"/>
    </location>
</feature>
<feature type="modified residue" description="Phosphoserine" evidence="4 8">
    <location>
        <position position="132"/>
    </location>
</feature>
<feature type="modified residue" description="Phosphoserine" evidence="6">
    <location>
        <position position="165"/>
    </location>
</feature>
<feature type="modified residue" description="Phosphoserine" evidence="4 6 7 8">
    <location>
        <position position="167"/>
    </location>
</feature>
<feature type="modified residue" description="Phosphoserine" evidence="7">
    <location>
        <position position="220"/>
    </location>
</feature>
<feature type="modified residue" description="Phosphoserine" evidence="9">
    <location>
        <position position="260"/>
    </location>
</feature>
<feature type="modified residue" description="Phosphoserine" evidence="8">
    <location>
        <position position="597"/>
    </location>
</feature>
<feature type="modified residue" description="Phosphoserine" evidence="6 8">
    <location>
        <position position="871"/>
    </location>
</feature>
<feature type="modified residue" description="Phosphoserine" evidence="6 7">
    <location>
        <position position="892"/>
    </location>
</feature>
<feature type="modified residue" description="Phosphoserine" evidence="6">
    <location>
        <position position="893"/>
    </location>
</feature>
<feature type="modified residue" description="Phosphothreonine" evidence="5 8">
    <location>
        <position position="895"/>
    </location>
</feature>
<feature type="modified residue" description="Phosphoserine" evidence="8 9">
    <location>
        <position position="901"/>
    </location>
</feature>
<feature type="splice variant" id="VSP_010566" description="In isoform 2." evidence="2">
    <original>MVVFWNL</original>
    <variation>KKNQNKT</variation>
    <location>
        <begin position="579"/>
        <end position="585"/>
    </location>
</feature>
<feature type="splice variant" id="VSP_010567" description="In isoform 2." evidence="2">
    <location>
        <begin position="586"/>
        <end position="911"/>
    </location>
</feature>
<feature type="sequence conflict" description="In Ref. 3; AAP88801 and 4; AAH20981." evidence="3" ref="3 4">
    <original>N</original>
    <variation>D</variation>
    <location>
        <position position="301"/>
    </location>
</feature>
<feature type="strand" evidence="10">
    <location>
        <begin position="298"/>
        <end position="300"/>
    </location>
</feature>
<feature type="helix" evidence="10">
    <location>
        <begin position="301"/>
        <end position="321"/>
    </location>
</feature>
<feature type="helix" evidence="10">
    <location>
        <begin position="334"/>
        <end position="336"/>
    </location>
</feature>
<feature type="strand" evidence="10">
    <location>
        <begin position="337"/>
        <end position="339"/>
    </location>
</feature>
<feature type="helix" evidence="10">
    <location>
        <begin position="342"/>
        <end position="345"/>
    </location>
</feature>
<feature type="turn" evidence="10">
    <location>
        <begin position="346"/>
        <end position="348"/>
    </location>
</feature>
<feature type="strand" evidence="10">
    <location>
        <begin position="358"/>
        <end position="362"/>
    </location>
</feature>
<feature type="turn" evidence="10">
    <location>
        <begin position="384"/>
        <end position="386"/>
    </location>
</feature>
<feature type="strand" evidence="10">
    <location>
        <begin position="389"/>
        <end position="392"/>
    </location>
</feature>
<feature type="strand" evidence="10">
    <location>
        <begin position="397"/>
        <end position="402"/>
    </location>
</feature>
<feature type="strand" evidence="10">
    <location>
        <begin position="414"/>
        <end position="419"/>
    </location>
</feature>
<feature type="strand" evidence="10">
    <location>
        <begin position="428"/>
        <end position="431"/>
    </location>
</feature>
<feature type="strand" evidence="10">
    <location>
        <begin position="437"/>
        <end position="443"/>
    </location>
</feature>
<feature type="turn" evidence="10">
    <location>
        <begin position="449"/>
        <end position="451"/>
    </location>
</feature>
<feature type="strand" evidence="10">
    <location>
        <begin position="458"/>
        <end position="467"/>
    </location>
</feature>
<feature type="strand" evidence="10">
    <location>
        <begin position="470"/>
        <end position="475"/>
    </location>
</feature>
<feature type="strand" evidence="10">
    <location>
        <begin position="477"/>
        <end position="479"/>
    </location>
</feature>
<feature type="strand" evidence="10">
    <location>
        <begin position="495"/>
        <end position="503"/>
    </location>
</feature>
<feature type="strand" evidence="10">
    <location>
        <begin position="508"/>
        <end position="514"/>
    </location>
</feature>
<feature type="helix" evidence="10">
    <location>
        <begin position="516"/>
        <end position="522"/>
    </location>
</feature>
<feature type="strand" evidence="10">
    <location>
        <begin position="532"/>
        <end position="535"/>
    </location>
</feature>
<feature type="strand" evidence="10">
    <location>
        <begin position="538"/>
        <end position="541"/>
    </location>
</feature>
<feature type="strand" evidence="10">
    <location>
        <begin position="556"/>
        <end position="562"/>
    </location>
</feature>
<feature type="strand" evidence="10">
    <location>
        <begin position="570"/>
        <end position="575"/>
    </location>
</feature>
<feature type="strand" evidence="10">
    <location>
        <begin position="578"/>
        <end position="584"/>
    </location>
</feature>
<feature type="turn" evidence="10">
    <location>
        <begin position="590"/>
        <end position="592"/>
    </location>
</feature>
<feature type="strand" evidence="10">
    <location>
        <begin position="593"/>
        <end position="595"/>
    </location>
</feature>
<feature type="strand" evidence="10">
    <location>
        <begin position="601"/>
        <end position="603"/>
    </location>
</feature>
<feature type="strand" evidence="10">
    <location>
        <begin position="606"/>
        <end position="610"/>
    </location>
</feature>
<feature type="strand" evidence="10">
    <location>
        <begin position="618"/>
        <end position="621"/>
    </location>
</feature>
<feature type="strand" evidence="10">
    <location>
        <begin position="628"/>
        <end position="632"/>
    </location>
</feature>
<feature type="turn" evidence="11">
    <location>
        <begin position="634"/>
        <end position="636"/>
    </location>
</feature>
<feature type="strand" evidence="10">
    <location>
        <begin position="637"/>
        <end position="642"/>
    </location>
</feature>
<feature type="strand" evidence="10">
    <location>
        <begin position="650"/>
        <end position="654"/>
    </location>
</feature>
<feature type="strand" evidence="10">
    <location>
        <begin position="658"/>
        <end position="662"/>
    </location>
</feature>
<feature type="strand" evidence="10">
    <location>
        <begin position="668"/>
        <end position="674"/>
    </location>
</feature>
<feature type="helix" evidence="10">
    <location>
        <begin position="676"/>
        <end position="678"/>
    </location>
</feature>
<feature type="turn" evidence="10">
    <location>
        <begin position="681"/>
        <end position="683"/>
    </location>
</feature>
<feature type="strand" evidence="10">
    <location>
        <begin position="685"/>
        <end position="689"/>
    </location>
</feature>
<feature type="strand" evidence="10">
    <location>
        <begin position="692"/>
        <end position="694"/>
    </location>
</feature>
<feature type="strand" evidence="10">
    <location>
        <begin position="699"/>
        <end position="703"/>
    </location>
</feature>
<feature type="strand" evidence="10">
    <location>
        <begin position="708"/>
        <end position="713"/>
    </location>
</feature>
<feature type="turn" evidence="10">
    <location>
        <begin position="715"/>
        <end position="717"/>
    </location>
</feature>
<feature type="strand" evidence="10">
    <location>
        <begin position="719"/>
        <end position="724"/>
    </location>
</feature>
<feature type="strand" evidence="10">
    <location>
        <begin position="727"/>
        <end position="733"/>
    </location>
</feature>
<feature type="helix" evidence="10">
    <location>
        <begin position="741"/>
        <end position="743"/>
    </location>
</feature>
<feature type="helix" evidence="10">
    <location>
        <begin position="747"/>
        <end position="750"/>
    </location>
</feature>
<feature type="strand" evidence="10">
    <location>
        <begin position="751"/>
        <end position="761"/>
    </location>
</feature>
<feature type="helix" evidence="10">
    <location>
        <begin position="787"/>
        <end position="791"/>
    </location>
</feature>
<feature type="strand" evidence="10">
    <location>
        <begin position="794"/>
        <end position="800"/>
    </location>
</feature>
<feature type="helix" evidence="10">
    <location>
        <begin position="809"/>
        <end position="811"/>
    </location>
</feature>
<feature type="helix" evidence="10">
    <location>
        <begin position="813"/>
        <end position="821"/>
    </location>
</feature>
<feature type="turn" evidence="10">
    <location>
        <begin position="822"/>
        <end position="824"/>
    </location>
</feature>
<feature type="strand" evidence="10">
    <location>
        <begin position="837"/>
        <end position="842"/>
    </location>
</feature>
<feature type="turn" evidence="10">
    <location>
        <begin position="847"/>
        <end position="850"/>
    </location>
</feature>
<feature type="strand" evidence="10">
    <location>
        <begin position="851"/>
        <end position="856"/>
    </location>
</feature>
<feature type="strand" evidence="10">
    <location>
        <begin position="860"/>
        <end position="865"/>
    </location>
</feature>
<feature type="turn" evidence="10">
    <location>
        <begin position="867"/>
        <end position="869"/>
    </location>
</feature>
<feature type="helix" evidence="10">
    <location>
        <begin position="872"/>
        <end position="888"/>
    </location>
</feature>
<name>TF3C2_HUMAN</name>
<comment type="function">
    <text>Required for RNA polymerase III-mediated transcription. Component of TFIIIC that initiates transcription complex assembly on tRNA and is required for transcription of 5S rRNA and other stable nuclear and cytoplasmic RNAs. May play a direct role in stabilizing interactions of TFIIIC2 with TFIIIC1.</text>
</comment>
<comment type="subunit">
    <text>Part of the TFIIIC subcomplex TFIIIC2, consisting of six subunits, GTF3C1, GTF3C2, GTF3C3, GTF3C4, GTF3C5 and GTF3C6.</text>
</comment>
<comment type="interaction">
    <interactant intactId="EBI-1237062">
        <id>Q8WUA4</id>
    </interactant>
    <interactant intactId="EBI-357956">
        <id>Q12789</id>
        <label>GTF3C1</label>
    </interactant>
    <organismsDiffer>false</organismsDiffer>
    <experiments>3</experiments>
</comment>
<comment type="interaction">
    <interactant intactId="EBI-1237062">
        <id>Q8WUA4</id>
    </interactant>
    <interactant intactId="EBI-359260">
        <id>P42345</id>
        <label>MTOR</label>
    </interactant>
    <organismsDiffer>false</organismsDiffer>
    <experiments>3</experiments>
</comment>
<comment type="interaction">
    <interactant intactId="EBI-1237062">
        <id>Q8WUA4</id>
    </interactant>
    <interactant intactId="EBI-1567928">
        <id>Q8N122</id>
        <label>RPTOR</label>
    </interactant>
    <organismsDiffer>false</organismsDiffer>
    <experiments>3</experiments>
</comment>
<comment type="interaction">
    <interactant intactId="EBI-11957962">
        <id>Q8WUA4-2</id>
    </interactant>
    <interactant intactId="EBI-2107455">
        <id>Q08AM6</id>
        <label>VAC14</label>
    </interactant>
    <organismsDiffer>false</organismsDiffer>
    <experiments>3</experiments>
</comment>
<comment type="subcellular location">
    <subcellularLocation>
        <location>Nucleus</location>
    </subcellularLocation>
</comment>
<comment type="alternative products">
    <event type="alternative splicing"/>
    <isoform>
        <id>Q8WUA4-1</id>
        <name>1</name>
        <sequence type="displayed"/>
    </isoform>
    <isoform>
        <id>Q8WUA4-2</id>
        <name>2</name>
        <sequence type="described" ref="VSP_010566 VSP_010567"/>
    </isoform>
</comment>
<sequence length="911" mass="100680">MDTCGVGYVALGEAGPVGNMTVVDSPGQEVLNQLDVKTSSEMTSAEASVEMSLPTPLPGFEDSPDQRRLPPEQESLSRLEQPDLSSEMSKVSKPRASKPGRKRGGRTRKGPKRPQQPNPPSAPLVPGLLDQSNPLSTPMPKKRGRKSKAELLLLKLSKDLDRPESQSPKRPPEDFETPSGERPRRRAAQVALLYLQELAEELSTALPAPVSCPEGPKVSSPTKPKKIRQPAACPGGEEVDGAPRDEDFFLQVEAEDVEESEGPSESSSEPEPVVPRSTPRGSTSGKQKPHCRGMAPNGLPNHIMAPVWKCLHLTKDFREQKHSYWEFAEWIPLAWKWHLLSELEAAPYLPQEEKSPLFSVQREGLPEDGTLYRINRFSSITAHPERWDVSFFTGGPLWALDWCPVPEGAGASQYVALFSSPDMNETHPLSQLHSGPGLLQLWGLGTLQQESCPGNRAHFVYGIACDNGCIWDLKFCPSGAWELPGTPRKAPLLPRLGLLALACSDGKVLLFSLPHPEALLAQQPPDAVKPAIYKVQCVATLQVGSMQATDPSECGQCLSLAWMPTRPHQHLAAGYYNGMVVFWNLPTNSPLQRIRLSDGSLKLYPFQCFLAHDQAVRTLQWCKANSHFLVSAGSDRKIKFWDLRRPYEPINSIKRFLSTELAWLLPYNGVTVAQDNCYASYGLCGIHYIDAGYLGFKAYFTAPRKGTVWSLSGSDWLGTIAAGDISGELIAAILPDMALNPINVKRPVERRFPIYKADLIPYQDSPEGPDHSSASSGVPNPPKARTYTETVNHHYLLFQDTDLGSFHDLLRREPMLRMQEGEGHSQLCLDRLQLEAIHKVRFSPNLDSYGWLVSGGQSGLVRIHFVRGLASPLGHRMQLESRAHFNAMFQPSSPTRRPGFSPTSHRLLPTP</sequence>
<protein>
    <recommendedName>
        <fullName>General transcription factor 3C polypeptide 2</fullName>
    </recommendedName>
    <alternativeName>
        <fullName>TF3C-beta</fullName>
    </alternativeName>
    <alternativeName>
        <fullName>Transcription factor IIIC 110 kDa subunit</fullName>
        <shortName>TFIIIC 110 kDa subunit</shortName>
        <shortName>TFIIIC110</shortName>
    </alternativeName>
    <alternativeName>
        <fullName>Transcription factor IIIC subunit beta</fullName>
    </alternativeName>
</protein>
<dbReference type="EMBL" id="D13636">
    <property type="protein sequence ID" value="BAA02800.1"/>
    <property type="molecule type" value="mRNA"/>
</dbReference>
<dbReference type="EMBL" id="BT009799">
    <property type="protein sequence ID" value="AAP88801.1"/>
    <property type="molecule type" value="mRNA"/>
</dbReference>
<dbReference type="EMBL" id="CH471053">
    <property type="protein sequence ID" value="EAX00595.1"/>
    <property type="molecule type" value="Genomic_DNA"/>
</dbReference>
<dbReference type="EMBL" id="CH471053">
    <property type="protein sequence ID" value="EAX00596.1"/>
    <property type="molecule type" value="Genomic_DNA"/>
</dbReference>
<dbReference type="EMBL" id="BC000212">
    <property type="protein sequence ID" value="AAH00212.1"/>
    <property type="molecule type" value="mRNA"/>
</dbReference>
<dbReference type="EMBL" id="BC020981">
    <property type="protein sequence ID" value="AAH20981.1"/>
    <property type="molecule type" value="mRNA"/>
</dbReference>
<dbReference type="EMBL" id="AF054988">
    <property type="protein sequence ID" value="AAC09349.1"/>
    <property type="molecule type" value="mRNA"/>
</dbReference>
<dbReference type="CCDS" id="CCDS1749.1">
    <molecule id="Q8WUA4-1"/>
</dbReference>
<dbReference type="PIR" id="A56465">
    <property type="entry name" value="A56465"/>
</dbReference>
<dbReference type="RefSeq" id="NP_001030598.1">
    <molecule id="Q8WUA4-1"/>
    <property type="nucleotide sequence ID" value="NM_001035521.3"/>
</dbReference>
<dbReference type="RefSeq" id="NP_001305838.2">
    <molecule id="Q8WUA4-1"/>
    <property type="nucleotide sequence ID" value="NM_001318909.4"/>
</dbReference>
<dbReference type="RefSeq" id="NP_001375309.2">
    <molecule id="Q8WUA4-1"/>
    <property type="nucleotide sequence ID" value="NM_001388380.3"/>
</dbReference>
<dbReference type="RefSeq" id="NP_001381432.1">
    <molecule id="Q8WUA4-1"/>
    <property type="nucleotide sequence ID" value="NM_001394503.1"/>
</dbReference>
<dbReference type="RefSeq" id="NP_001381433.1">
    <molecule id="Q8WUA4-1"/>
    <property type="nucleotide sequence ID" value="NM_001394504.1"/>
</dbReference>
<dbReference type="RefSeq" id="NP_001381434.1">
    <molecule id="Q8WUA4-1"/>
    <property type="nucleotide sequence ID" value="NM_001394505.1"/>
</dbReference>
<dbReference type="RefSeq" id="NP_001381435.1">
    <molecule id="Q8WUA4-1"/>
    <property type="nucleotide sequence ID" value="NM_001394506.1"/>
</dbReference>
<dbReference type="RefSeq" id="NP_001381436.1">
    <molecule id="Q8WUA4-1"/>
    <property type="nucleotide sequence ID" value="NM_001394507.1"/>
</dbReference>
<dbReference type="RefSeq" id="NP_001381437.1">
    <molecule id="Q8WUA4-1"/>
    <property type="nucleotide sequence ID" value="NM_001394508.1"/>
</dbReference>
<dbReference type="RefSeq" id="NP_001381438.1">
    <molecule id="Q8WUA4-1"/>
    <property type="nucleotide sequence ID" value="NM_001394509.1"/>
</dbReference>
<dbReference type="RefSeq" id="NP_001381439.1">
    <molecule id="Q8WUA4-1"/>
    <property type="nucleotide sequence ID" value="NM_001394510.1"/>
</dbReference>
<dbReference type="RefSeq" id="NP_001381440.1">
    <molecule id="Q8WUA4-1"/>
    <property type="nucleotide sequence ID" value="NM_001394511.1"/>
</dbReference>
<dbReference type="RefSeq" id="NP_001512.1">
    <molecule id="Q8WUA4-1"/>
    <property type="nucleotide sequence ID" value="NM_001521.4"/>
</dbReference>
<dbReference type="RefSeq" id="XP_054197514.1">
    <molecule id="Q8WUA4-1"/>
    <property type="nucleotide sequence ID" value="XM_054341539.1"/>
</dbReference>
<dbReference type="RefSeq" id="XP_054197515.1">
    <molecule id="Q8WUA4-1"/>
    <property type="nucleotide sequence ID" value="XM_054341540.1"/>
</dbReference>
<dbReference type="PDB" id="8CLI">
    <property type="method" value="EM"/>
    <property type="resolution" value="3.20 A"/>
    <property type="chains" value="C=1-911"/>
</dbReference>
<dbReference type="PDB" id="8CLJ">
    <property type="method" value="EM"/>
    <property type="resolution" value="3.20 A"/>
    <property type="chains" value="C/H=1-911"/>
</dbReference>
<dbReference type="PDB" id="8CLL">
    <property type="method" value="EM"/>
    <property type="resolution" value="3.40 A"/>
    <property type="chains" value="C/H=1-911"/>
</dbReference>
<dbReference type="PDBsum" id="8CLI"/>
<dbReference type="PDBsum" id="8CLJ"/>
<dbReference type="PDBsum" id="8CLL"/>
<dbReference type="EMDB" id="EMD-16713"/>
<dbReference type="EMDB" id="EMD-16714"/>
<dbReference type="EMDB" id="EMD-16717"/>
<dbReference type="SMR" id="Q8WUA4"/>
<dbReference type="BioGRID" id="109231">
    <property type="interactions" value="199"/>
</dbReference>
<dbReference type="ComplexPortal" id="CPX-2373">
    <property type="entry name" value="General transcription factor TFIIIC complex"/>
</dbReference>
<dbReference type="CORUM" id="Q8WUA4"/>
<dbReference type="DIP" id="DIP-38213N"/>
<dbReference type="FunCoup" id="Q8WUA4">
    <property type="interactions" value="2632"/>
</dbReference>
<dbReference type="IntAct" id="Q8WUA4">
    <property type="interactions" value="110"/>
</dbReference>
<dbReference type="MINT" id="Q8WUA4"/>
<dbReference type="STRING" id="9606.ENSP00000352536"/>
<dbReference type="GlyGen" id="Q8WUA4">
    <property type="glycosylation" value="2 sites, 1 O-linked glycan (1 site)"/>
</dbReference>
<dbReference type="iPTMnet" id="Q8WUA4"/>
<dbReference type="MetOSite" id="Q8WUA4"/>
<dbReference type="PhosphoSitePlus" id="Q8WUA4"/>
<dbReference type="SwissPalm" id="Q8WUA4"/>
<dbReference type="BioMuta" id="GTF3C2"/>
<dbReference type="DMDM" id="48428661"/>
<dbReference type="jPOST" id="Q8WUA4"/>
<dbReference type="MassIVE" id="Q8WUA4"/>
<dbReference type="PaxDb" id="9606-ENSP00000352536"/>
<dbReference type="PeptideAtlas" id="Q8WUA4"/>
<dbReference type="ProteomicsDB" id="74647">
    <molecule id="Q8WUA4-1"/>
</dbReference>
<dbReference type="ProteomicsDB" id="74648">
    <molecule id="Q8WUA4-2"/>
</dbReference>
<dbReference type="Pumba" id="Q8WUA4"/>
<dbReference type="Antibodypedia" id="13626">
    <property type="antibodies" value="209 antibodies from 28 providers"/>
</dbReference>
<dbReference type="DNASU" id="2976"/>
<dbReference type="Ensembl" id="ENST00000264720.8">
    <molecule id="Q8WUA4-1"/>
    <property type="protein sequence ID" value="ENSP00000264720.3"/>
    <property type="gene ID" value="ENSG00000115207.15"/>
</dbReference>
<dbReference type="Ensembl" id="ENST00000359541.6">
    <molecule id="Q8WUA4-1"/>
    <property type="protein sequence ID" value="ENSP00000352536.2"/>
    <property type="gene ID" value="ENSG00000115207.15"/>
</dbReference>
<dbReference type="GeneID" id="2976"/>
<dbReference type="KEGG" id="hsa:2976"/>
<dbReference type="MANE-Select" id="ENST00000264720.8">
    <property type="protein sequence ID" value="ENSP00000264720.3"/>
    <property type="RefSeq nucleotide sequence ID" value="NM_001035521.3"/>
    <property type="RefSeq protein sequence ID" value="NP_001030598.1"/>
</dbReference>
<dbReference type="UCSC" id="uc002rju.3">
    <molecule id="Q8WUA4-1"/>
    <property type="organism name" value="human"/>
</dbReference>
<dbReference type="AGR" id="HGNC:4665"/>
<dbReference type="CTD" id="2976"/>
<dbReference type="DisGeNET" id="2976"/>
<dbReference type="GeneCards" id="GTF3C2"/>
<dbReference type="HGNC" id="HGNC:4665">
    <property type="gene designation" value="GTF3C2"/>
</dbReference>
<dbReference type="HPA" id="ENSG00000115207">
    <property type="expression patterns" value="Low tissue specificity"/>
</dbReference>
<dbReference type="MIM" id="604883">
    <property type="type" value="gene"/>
</dbReference>
<dbReference type="neXtProt" id="NX_Q8WUA4"/>
<dbReference type="OpenTargets" id="ENSG00000115207"/>
<dbReference type="PharmGKB" id="PA29053"/>
<dbReference type="VEuPathDB" id="HostDB:ENSG00000115207"/>
<dbReference type="eggNOG" id="ENOG502RAA6">
    <property type="taxonomic scope" value="Eukaryota"/>
</dbReference>
<dbReference type="GeneTree" id="ENSGT00390000018632"/>
<dbReference type="HOGENOM" id="CLU_014720_0_0_1"/>
<dbReference type="InParanoid" id="Q8WUA4"/>
<dbReference type="OMA" id="GFIWQLK"/>
<dbReference type="OrthoDB" id="4703at2759"/>
<dbReference type="PAN-GO" id="Q8WUA4">
    <property type="GO annotations" value="2 GO annotations based on evolutionary models"/>
</dbReference>
<dbReference type="PhylomeDB" id="Q8WUA4"/>
<dbReference type="TreeFam" id="TF314779"/>
<dbReference type="PathwayCommons" id="Q8WUA4"/>
<dbReference type="Reactome" id="R-HSA-749476">
    <property type="pathway name" value="RNA Polymerase III Abortive And Retractive Initiation"/>
</dbReference>
<dbReference type="Reactome" id="R-HSA-76061">
    <property type="pathway name" value="RNA Polymerase III Transcription Initiation From Type 1 Promoter"/>
</dbReference>
<dbReference type="Reactome" id="R-HSA-76066">
    <property type="pathway name" value="RNA Polymerase III Transcription Initiation From Type 2 Promoter"/>
</dbReference>
<dbReference type="SignaLink" id="Q8WUA4"/>
<dbReference type="SIGNOR" id="Q8WUA4"/>
<dbReference type="BioGRID-ORCS" id="2976">
    <property type="hits" value="617 hits in 1166 CRISPR screens"/>
</dbReference>
<dbReference type="CD-CODE" id="DEE660B4">
    <property type="entry name" value="Stress granule"/>
</dbReference>
<dbReference type="ChiTaRS" id="GTF3C2">
    <property type="organism name" value="human"/>
</dbReference>
<dbReference type="GeneWiki" id="GTF3C2"/>
<dbReference type="GenomeRNAi" id="2976"/>
<dbReference type="Pharos" id="Q8WUA4">
    <property type="development level" value="Tbio"/>
</dbReference>
<dbReference type="PRO" id="PR:Q8WUA4"/>
<dbReference type="Proteomes" id="UP000005640">
    <property type="component" value="Chromosome 2"/>
</dbReference>
<dbReference type="RNAct" id="Q8WUA4">
    <property type="molecule type" value="protein"/>
</dbReference>
<dbReference type="Bgee" id="ENSG00000115207">
    <property type="expression patterns" value="Expressed in lower esophagus mucosa and 103 other cell types or tissues"/>
</dbReference>
<dbReference type="ExpressionAtlas" id="Q8WUA4">
    <property type="expression patterns" value="baseline and differential"/>
</dbReference>
<dbReference type="GO" id="GO:0005654">
    <property type="term" value="C:nucleoplasm"/>
    <property type="evidence" value="ECO:0000314"/>
    <property type="project" value="HPA"/>
</dbReference>
<dbReference type="GO" id="GO:0000127">
    <property type="term" value="C:transcription factor TFIIIC complex"/>
    <property type="evidence" value="ECO:0000314"/>
    <property type="project" value="HGNC-UCL"/>
</dbReference>
<dbReference type="GO" id="GO:0000995">
    <property type="term" value="F:RNA polymerase III general transcription initiation factor activity"/>
    <property type="evidence" value="ECO:0000314"/>
    <property type="project" value="GO_Central"/>
</dbReference>
<dbReference type="GO" id="GO:0042791">
    <property type="term" value="P:5S class rRNA transcription by RNA polymerase III"/>
    <property type="evidence" value="ECO:0000305"/>
    <property type="project" value="HGNC-UCL"/>
</dbReference>
<dbReference type="GO" id="GO:0006383">
    <property type="term" value="P:transcription by RNA polymerase III"/>
    <property type="evidence" value="ECO:0000314"/>
    <property type="project" value="HGNC-UCL"/>
</dbReference>
<dbReference type="GO" id="GO:0042797">
    <property type="term" value="P:tRNA transcription by RNA polymerase III"/>
    <property type="evidence" value="ECO:0000305"/>
    <property type="project" value="HGNC-UCL"/>
</dbReference>
<dbReference type="FunFam" id="2.130.10.10:FF:000311">
    <property type="entry name" value="general transcription factor 3C polypeptide 2"/>
    <property type="match status" value="1"/>
</dbReference>
<dbReference type="Gene3D" id="2.130.10.10">
    <property type="entry name" value="YVTN repeat-like/Quinoprotein amine dehydrogenase"/>
    <property type="match status" value="1"/>
</dbReference>
<dbReference type="InterPro" id="IPR052416">
    <property type="entry name" value="GTF3C_component"/>
</dbReference>
<dbReference type="InterPro" id="IPR015943">
    <property type="entry name" value="WD40/YVTN_repeat-like_dom_sf"/>
</dbReference>
<dbReference type="InterPro" id="IPR019775">
    <property type="entry name" value="WD40_repeat_CS"/>
</dbReference>
<dbReference type="InterPro" id="IPR036322">
    <property type="entry name" value="WD40_repeat_dom_sf"/>
</dbReference>
<dbReference type="InterPro" id="IPR001680">
    <property type="entry name" value="WD40_rpt"/>
</dbReference>
<dbReference type="PANTHER" id="PTHR15052:SF2">
    <property type="entry name" value="GENERAL TRANSCRIPTION FACTOR 3C POLYPEPTIDE 2"/>
    <property type="match status" value="1"/>
</dbReference>
<dbReference type="PANTHER" id="PTHR15052">
    <property type="entry name" value="RNA POLYMERASE III TRANSCRIPTION INITIATION FACTOR COMPLEX SUBUNIT"/>
    <property type="match status" value="1"/>
</dbReference>
<dbReference type="Pfam" id="PF00400">
    <property type="entry name" value="WD40"/>
    <property type="match status" value="1"/>
</dbReference>
<dbReference type="SMART" id="SM00320">
    <property type="entry name" value="WD40"/>
    <property type="match status" value="4"/>
</dbReference>
<dbReference type="SUPFAM" id="SSF50978">
    <property type="entry name" value="WD40 repeat-like"/>
    <property type="match status" value="1"/>
</dbReference>
<dbReference type="PROSITE" id="PS00678">
    <property type="entry name" value="WD_REPEATS_1"/>
    <property type="match status" value="2"/>
</dbReference>
<dbReference type="PROSITE" id="PS50082">
    <property type="entry name" value="WD_REPEATS_2"/>
    <property type="match status" value="1"/>
</dbReference>
<dbReference type="PROSITE" id="PS50294">
    <property type="entry name" value="WD_REPEATS_REGION"/>
    <property type="match status" value="1"/>
</dbReference>
<reference key="1">
    <citation type="journal article" date="1995" name="Genes Dev.">
        <title>Cloning and characterization of a TFIIIC2 subunit (TFIIIC beta) whose presence correlates with activation of RNA polymerase III-mediated transcription by adenovirus E1A expression and serum factors.</title>
        <authorList>
            <person name="Sinn E."/>
            <person name="Wang Z."/>
            <person name="Kovelman R."/>
            <person name="Roeder R.G."/>
        </authorList>
    </citation>
    <scope>NUCLEOTIDE SEQUENCE [MRNA] (ISOFORM 1)</scope>
    <scope>PROTEIN SEQUENCE OF 41-62; 338-354; 642-654 AND 757-774</scope>
    <scope>IDENTIFICATION OF SUBUNITS OF TFIIIC2 COMPLEX</scope>
</reference>
<reference key="2">
    <citation type="journal article" date="1994" name="DNA Res.">
        <title>Prediction of the coding sequences of unidentified human genes. I. The coding sequences of 40 new genes (KIAA0001-KIAA0040) deduced by analysis of randomly sampled cDNA clones from human immature myeloid cell line KG-1.</title>
        <authorList>
            <person name="Nomura N."/>
            <person name="Miyajima N."/>
            <person name="Sazuka T."/>
            <person name="Tanaka A."/>
            <person name="Kawarabayasi Y."/>
            <person name="Sato S."/>
            <person name="Nagase T."/>
            <person name="Seki N."/>
            <person name="Ishikawa K."/>
            <person name="Tabata S."/>
        </authorList>
    </citation>
    <scope>NUCLEOTIDE SEQUENCE [LARGE SCALE MRNA] (ISOFORM 1)</scope>
    <source>
        <tissue>Bone marrow</tissue>
    </source>
</reference>
<reference key="3">
    <citation type="submission" date="2003-08" db="EMBL/GenBank/DDBJ databases">
        <title>Cloning of human full-length CDSs in BD Creator(TM) system donor vector.</title>
        <authorList>
            <person name="Kalnine N."/>
            <person name="Chen X."/>
            <person name="Rolfs A."/>
            <person name="Halleck A."/>
            <person name="Hines L."/>
            <person name="Eisenstein S."/>
            <person name="Koundinya M."/>
            <person name="Raphael J."/>
            <person name="Moreira D."/>
            <person name="Kelley T."/>
            <person name="LaBaer J."/>
            <person name="Lin Y."/>
            <person name="Phelan M."/>
            <person name="Farmer A."/>
        </authorList>
    </citation>
    <scope>NUCLEOTIDE SEQUENCE [LARGE SCALE MRNA] (ISOFORM 1)</scope>
</reference>
<reference key="4">
    <citation type="submission" date="2005-09" db="EMBL/GenBank/DDBJ databases">
        <authorList>
            <person name="Mural R.J."/>
            <person name="Istrail S."/>
            <person name="Sutton G.G."/>
            <person name="Florea L."/>
            <person name="Halpern A.L."/>
            <person name="Mobarry C.M."/>
            <person name="Lippert R."/>
            <person name="Walenz B."/>
            <person name="Shatkay H."/>
            <person name="Dew I."/>
            <person name="Miller J.R."/>
            <person name="Flanigan M.J."/>
            <person name="Edwards N.J."/>
            <person name="Bolanos R."/>
            <person name="Fasulo D."/>
            <person name="Halldorsson B.V."/>
            <person name="Hannenhalli S."/>
            <person name="Turner R."/>
            <person name="Yooseph S."/>
            <person name="Lu F."/>
            <person name="Nusskern D.R."/>
            <person name="Shue B.C."/>
            <person name="Zheng X.H."/>
            <person name="Zhong F."/>
            <person name="Delcher A.L."/>
            <person name="Huson D.H."/>
            <person name="Kravitz S.A."/>
            <person name="Mouchard L."/>
            <person name="Reinert K."/>
            <person name="Remington K.A."/>
            <person name="Clark A.G."/>
            <person name="Waterman M.S."/>
            <person name="Eichler E.E."/>
            <person name="Adams M.D."/>
            <person name="Hunkapiller M.W."/>
            <person name="Myers E.W."/>
            <person name="Venter J.C."/>
        </authorList>
    </citation>
    <scope>NUCLEOTIDE SEQUENCE [LARGE SCALE GENOMIC DNA]</scope>
</reference>
<reference key="5">
    <citation type="journal article" date="2004" name="Genome Res.">
        <title>The status, quality, and expansion of the NIH full-length cDNA project: the Mammalian Gene Collection (MGC).</title>
        <authorList>
            <consortium name="The MGC Project Team"/>
        </authorList>
    </citation>
    <scope>NUCLEOTIDE SEQUENCE [LARGE SCALE MRNA] (ISOFORMS 1 AND 2)</scope>
    <source>
        <tissue>Brain</tissue>
        <tissue>Colon</tissue>
    </source>
</reference>
<reference key="6">
    <citation type="submission" date="1998-03" db="EMBL/GenBank/DDBJ databases">
        <authorList>
            <person name="Yu W."/>
            <person name="Gibbs R.A."/>
        </authorList>
    </citation>
    <scope>NUCLEOTIDE SEQUENCE [LARGE SCALE MRNA] OF 620-911</scope>
    <source>
        <tissue>Brain</tissue>
    </source>
</reference>
<reference key="7">
    <citation type="journal article" date="2006" name="Cell">
        <title>Global, in vivo, and site-specific phosphorylation dynamics in signaling networks.</title>
        <authorList>
            <person name="Olsen J.V."/>
            <person name="Blagoev B."/>
            <person name="Gnad F."/>
            <person name="Macek B."/>
            <person name="Kumar C."/>
            <person name="Mortensen P."/>
            <person name="Mann M."/>
        </authorList>
    </citation>
    <scope>IDENTIFICATION BY MASS SPECTROMETRY [LARGE SCALE ANALYSIS]</scope>
    <source>
        <tissue>Cervix carcinoma</tissue>
    </source>
</reference>
<reference key="8">
    <citation type="journal article" date="2008" name="J. Proteome Res.">
        <title>Combining protein-based IMAC, peptide-based IMAC, and MudPIT for efficient phosphoproteomic analysis.</title>
        <authorList>
            <person name="Cantin G.T."/>
            <person name="Yi W."/>
            <person name="Lu B."/>
            <person name="Park S.K."/>
            <person name="Xu T."/>
            <person name="Lee J.-D."/>
            <person name="Yates J.R. III"/>
        </authorList>
    </citation>
    <scope>IDENTIFICATION BY MASS SPECTROMETRY [LARGE SCALE ANALYSIS]</scope>
    <source>
        <tissue>Cervix carcinoma</tissue>
    </source>
</reference>
<reference key="9">
    <citation type="journal article" date="2008" name="Proc. Natl. Acad. Sci. U.S.A.">
        <title>A quantitative atlas of mitotic phosphorylation.</title>
        <authorList>
            <person name="Dephoure N."/>
            <person name="Zhou C."/>
            <person name="Villen J."/>
            <person name="Beausoleil S.A."/>
            <person name="Bakalarski C.E."/>
            <person name="Elledge S.J."/>
            <person name="Gygi S.P."/>
        </authorList>
    </citation>
    <scope>PHOSPHORYLATION [LARGE SCALE ANALYSIS] AT SER-132 AND SER-167</scope>
    <scope>IDENTIFICATION BY MASS SPECTROMETRY [LARGE SCALE ANALYSIS]</scope>
    <source>
        <tissue>Cervix carcinoma</tissue>
    </source>
</reference>
<reference key="10">
    <citation type="journal article" date="2009" name="Sci. Signal.">
        <title>Quantitative phosphoproteomic analysis of T cell receptor signaling reveals system-wide modulation of protein-protein interactions.</title>
        <authorList>
            <person name="Mayya V."/>
            <person name="Lundgren D.H."/>
            <person name="Hwang S.-I."/>
            <person name="Rezaul K."/>
            <person name="Wu L."/>
            <person name="Eng J.K."/>
            <person name="Rodionov V."/>
            <person name="Han D.K."/>
        </authorList>
    </citation>
    <scope>PHOSPHORYLATION [LARGE SCALE ANALYSIS] AT SER-63 AND THR-895</scope>
    <scope>IDENTIFICATION BY MASS SPECTROMETRY [LARGE SCALE ANALYSIS]</scope>
    <source>
        <tissue>Leukemic T-cell</tissue>
    </source>
</reference>
<reference key="11">
    <citation type="journal article" date="2010" name="Sci. Signal.">
        <title>Quantitative phosphoproteomics reveals widespread full phosphorylation site occupancy during mitosis.</title>
        <authorList>
            <person name="Olsen J.V."/>
            <person name="Vermeulen M."/>
            <person name="Santamaria A."/>
            <person name="Kumar C."/>
            <person name="Miller M.L."/>
            <person name="Jensen L.J."/>
            <person name="Gnad F."/>
            <person name="Cox J."/>
            <person name="Jensen T.S."/>
            <person name="Nigg E.A."/>
            <person name="Brunak S."/>
            <person name="Mann M."/>
        </authorList>
    </citation>
    <scope>PHOSPHORYLATION [LARGE SCALE ANALYSIS] AT SER-165; SER-167; SER-871; SER-892 AND SER-893</scope>
    <scope>IDENTIFICATION BY MASS SPECTROMETRY [LARGE SCALE ANALYSIS]</scope>
    <source>
        <tissue>Cervix carcinoma</tissue>
    </source>
</reference>
<reference key="12">
    <citation type="journal article" date="2011" name="BMC Syst. Biol.">
        <title>Initial characterization of the human central proteome.</title>
        <authorList>
            <person name="Burkard T.R."/>
            <person name="Planyavsky M."/>
            <person name="Kaupe I."/>
            <person name="Breitwieser F.P."/>
            <person name="Buerckstuemmer T."/>
            <person name="Bennett K.L."/>
            <person name="Superti-Furga G."/>
            <person name="Colinge J."/>
        </authorList>
    </citation>
    <scope>IDENTIFICATION BY MASS SPECTROMETRY [LARGE SCALE ANALYSIS]</scope>
</reference>
<reference key="13">
    <citation type="journal article" date="2011" name="Sci. Signal.">
        <title>System-wide temporal characterization of the proteome and phosphoproteome of human embryonic stem cell differentiation.</title>
        <authorList>
            <person name="Rigbolt K.T."/>
            <person name="Prokhorova T.A."/>
            <person name="Akimov V."/>
            <person name="Henningsen J."/>
            <person name="Johansen P.T."/>
            <person name="Kratchmarova I."/>
            <person name="Kassem M."/>
            <person name="Mann M."/>
            <person name="Olsen J.V."/>
            <person name="Blagoev B."/>
        </authorList>
    </citation>
    <scope>PHOSPHORYLATION [LARGE SCALE ANALYSIS] AT SER-167; SER-220 AND SER-892</scope>
    <scope>IDENTIFICATION BY MASS SPECTROMETRY [LARGE SCALE ANALYSIS]</scope>
</reference>
<reference key="14">
    <citation type="journal article" date="2013" name="J. Proteome Res.">
        <title>Toward a comprehensive characterization of a human cancer cell phosphoproteome.</title>
        <authorList>
            <person name="Zhou H."/>
            <person name="Di Palma S."/>
            <person name="Preisinger C."/>
            <person name="Peng M."/>
            <person name="Polat A.N."/>
            <person name="Heck A.J."/>
            <person name="Mohammed S."/>
        </authorList>
    </citation>
    <scope>PHOSPHORYLATION [LARGE SCALE ANALYSIS] AT SER-132; SER-167; SER-597; SER-871; THR-895 AND SER-901</scope>
    <scope>IDENTIFICATION BY MASS SPECTROMETRY [LARGE SCALE ANALYSIS]</scope>
    <source>
        <tissue>Cervix carcinoma</tissue>
        <tissue>Erythroleukemia</tissue>
    </source>
</reference>
<reference key="15">
    <citation type="journal article" date="2014" name="J. Proteomics">
        <title>An enzyme assisted RP-RPLC approach for in-depth analysis of human liver phosphoproteome.</title>
        <authorList>
            <person name="Bian Y."/>
            <person name="Song C."/>
            <person name="Cheng K."/>
            <person name="Dong M."/>
            <person name="Wang F."/>
            <person name="Huang J."/>
            <person name="Sun D."/>
            <person name="Wang L."/>
            <person name="Ye M."/>
            <person name="Zou H."/>
        </authorList>
    </citation>
    <scope>PHOSPHORYLATION [LARGE SCALE ANALYSIS] AT SER-63; SER-260 AND SER-901</scope>
    <scope>IDENTIFICATION BY MASS SPECTROMETRY [LARGE SCALE ANALYSIS]</scope>
    <source>
        <tissue>Liver</tissue>
    </source>
</reference>
<reference key="16">
    <citation type="journal article" date="2014" name="Mol. Cell. Proteomics">
        <title>Immunoaffinity enrichment and mass spectrometry analysis of protein methylation.</title>
        <authorList>
            <person name="Guo A."/>
            <person name="Gu H."/>
            <person name="Zhou J."/>
            <person name="Mulhern D."/>
            <person name="Wang Y."/>
            <person name="Lee K.A."/>
            <person name="Yang V."/>
            <person name="Aguiar M."/>
            <person name="Kornhauser J."/>
            <person name="Jia X."/>
            <person name="Ren J."/>
            <person name="Beausoleil S.A."/>
            <person name="Silva J.C."/>
            <person name="Vemulapalli V."/>
            <person name="Bedford M.T."/>
            <person name="Comb M.J."/>
        </authorList>
    </citation>
    <scope>IDENTIFICATION BY MASS SPECTROMETRY [LARGE SCALE ANALYSIS]</scope>
    <source>
        <tissue>Colon carcinoma</tissue>
    </source>
</reference>
<proteinExistence type="evidence at protein level"/>
<keyword id="KW-0002">3D-structure</keyword>
<keyword id="KW-0025">Alternative splicing</keyword>
<keyword id="KW-0903">Direct protein sequencing</keyword>
<keyword id="KW-0539">Nucleus</keyword>
<keyword id="KW-0597">Phosphoprotein</keyword>
<keyword id="KW-1267">Proteomics identification</keyword>
<keyword id="KW-1185">Reference proteome</keyword>
<keyword id="KW-0677">Repeat</keyword>
<keyword id="KW-0804">Transcription</keyword>
<keyword id="KW-0853">WD repeat</keyword>
<evidence type="ECO:0000256" key="1">
    <source>
        <dbReference type="SAM" id="MobiDB-lite"/>
    </source>
</evidence>
<evidence type="ECO:0000303" key="2">
    <source>
    </source>
</evidence>
<evidence type="ECO:0000305" key="3"/>
<evidence type="ECO:0007744" key="4">
    <source>
    </source>
</evidence>
<evidence type="ECO:0007744" key="5">
    <source>
    </source>
</evidence>
<evidence type="ECO:0007744" key="6">
    <source>
    </source>
</evidence>
<evidence type="ECO:0007744" key="7">
    <source>
    </source>
</evidence>
<evidence type="ECO:0007744" key="8">
    <source>
    </source>
</evidence>
<evidence type="ECO:0007744" key="9">
    <source>
    </source>
</evidence>
<evidence type="ECO:0007829" key="10">
    <source>
        <dbReference type="PDB" id="8CLI"/>
    </source>
</evidence>
<evidence type="ECO:0007829" key="11">
    <source>
        <dbReference type="PDB" id="8CLJ"/>
    </source>
</evidence>